<name>NTPPB_NEIG1</name>
<gene>
    <name type="ordered locus">NGO_2175</name>
</gene>
<accession>Q5F4W9</accession>
<comment type="function">
    <text evidence="1">Nucleoside triphosphate pyrophosphatase that hydrolyzes 7-methyl-GTP (m(7)GTP). May have a dual role in cell division arrest and in preventing the incorporation of modified nucleotides into cellular nucleic acids.</text>
</comment>
<comment type="catalytic activity">
    <reaction evidence="1">
        <text>N(7)-methyl-GTP + H2O = N(7)-methyl-GMP + diphosphate + H(+)</text>
        <dbReference type="Rhea" id="RHEA:58744"/>
        <dbReference type="ChEBI" id="CHEBI:15377"/>
        <dbReference type="ChEBI" id="CHEBI:15378"/>
        <dbReference type="ChEBI" id="CHEBI:33019"/>
        <dbReference type="ChEBI" id="CHEBI:58285"/>
        <dbReference type="ChEBI" id="CHEBI:87133"/>
    </reaction>
</comment>
<comment type="cofactor">
    <cofactor evidence="1">
        <name>a divalent metal cation</name>
        <dbReference type="ChEBI" id="CHEBI:60240"/>
    </cofactor>
</comment>
<comment type="subcellular location">
    <subcellularLocation>
        <location evidence="1">Cytoplasm</location>
    </subcellularLocation>
</comment>
<comment type="similarity">
    <text evidence="1">Belongs to the Maf family. YceF subfamily.</text>
</comment>
<evidence type="ECO:0000255" key="1">
    <source>
        <dbReference type="HAMAP-Rule" id="MF_00528"/>
    </source>
</evidence>
<dbReference type="EC" id="3.6.1.-" evidence="1"/>
<dbReference type="EMBL" id="AE004969">
    <property type="protein sequence ID" value="AAW90768.1"/>
    <property type="molecule type" value="Genomic_DNA"/>
</dbReference>
<dbReference type="RefSeq" id="WP_003690470.1">
    <property type="nucleotide sequence ID" value="NC_002946.2"/>
</dbReference>
<dbReference type="RefSeq" id="YP_209180.1">
    <property type="nucleotide sequence ID" value="NC_002946.2"/>
</dbReference>
<dbReference type="SMR" id="Q5F4W9"/>
<dbReference type="STRING" id="242231.NGO_2175"/>
<dbReference type="KEGG" id="ngo:NGO_2175"/>
<dbReference type="PATRIC" id="fig|242231.10.peg.2629"/>
<dbReference type="HOGENOM" id="CLU_040416_1_0_4"/>
<dbReference type="Proteomes" id="UP000000535">
    <property type="component" value="Chromosome"/>
</dbReference>
<dbReference type="GO" id="GO:0005737">
    <property type="term" value="C:cytoplasm"/>
    <property type="evidence" value="ECO:0007669"/>
    <property type="project" value="UniProtKB-SubCell"/>
</dbReference>
<dbReference type="GO" id="GO:0047429">
    <property type="term" value="F:nucleoside triphosphate diphosphatase activity"/>
    <property type="evidence" value="ECO:0007669"/>
    <property type="project" value="InterPro"/>
</dbReference>
<dbReference type="GO" id="GO:0009117">
    <property type="term" value="P:nucleotide metabolic process"/>
    <property type="evidence" value="ECO:0007669"/>
    <property type="project" value="UniProtKB-KW"/>
</dbReference>
<dbReference type="CDD" id="cd00555">
    <property type="entry name" value="Maf"/>
    <property type="match status" value="1"/>
</dbReference>
<dbReference type="FunFam" id="3.90.950.10:FF:000015">
    <property type="entry name" value="7-methyl-GTP pyrophosphatase"/>
    <property type="match status" value="1"/>
</dbReference>
<dbReference type="Gene3D" id="3.90.950.10">
    <property type="match status" value="1"/>
</dbReference>
<dbReference type="HAMAP" id="MF_00528">
    <property type="entry name" value="Maf"/>
    <property type="match status" value="1"/>
</dbReference>
<dbReference type="InterPro" id="IPR029001">
    <property type="entry name" value="ITPase-like_fam"/>
</dbReference>
<dbReference type="InterPro" id="IPR003697">
    <property type="entry name" value="Maf-like"/>
</dbReference>
<dbReference type="NCBIfam" id="TIGR00172">
    <property type="entry name" value="maf"/>
    <property type="match status" value="1"/>
</dbReference>
<dbReference type="PANTHER" id="PTHR43213">
    <property type="entry name" value="BIFUNCTIONAL DTTP/UTP PYROPHOSPHATASE/METHYLTRANSFERASE PROTEIN-RELATED"/>
    <property type="match status" value="1"/>
</dbReference>
<dbReference type="PANTHER" id="PTHR43213:SF5">
    <property type="entry name" value="BIFUNCTIONAL DTTP_UTP PYROPHOSPHATASE_METHYLTRANSFERASE PROTEIN-RELATED"/>
    <property type="match status" value="1"/>
</dbReference>
<dbReference type="Pfam" id="PF02545">
    <property type="entry name" value="Maf"/>
    <property type="match status" value="1"/>
</dbReference>
<dbReference type="PIRSF" id="PIRSF006305">
    <property type="entry name" value="Maf"/>
    <property type="match status" value="1"/>
</dbReference>
<dbReference type="SUPFAM" id="SSF52972">
    <property type="entry name" value="ITPase-like"/>
    <property type="match status" value="1"/>
</dbReference>
<organism>
    <name type="scientific">Neisseria gonorrhoeae (strain ATCC 700825 / FA 1090)</name>
    <dbReference type="NCBI Taxonomy" id="242231"/>
    <lineage>
        <taxon>Bacteria</taxon>
        <taxon>Pseudomonadati</taxon>
        <taxon>Pseudomonadota</taxon>
        <taxon>Betaproteobacteria</taxon>
        <taxon>Neisseriales</taxon>
        <taxon>Neisseriaceae</taxon>
        <taxon>Neisseria</taxon>
    </lineage>
</organism>
<keyword id="KW-0963">Cytoplasm</keyword>
<keyword id="KW-0378">Hydrolase</keyword>
<keyword id="KW-0546">Nucleotide metabolism</keyword>
<keyword id="KW-1185">Reference proteome</keyword>
<feature type="chain" id="PRO_0000267349" description="7-methyl-GTP pyrophosphatase">
    <location>
        <begin position="1"/>
        <end position="196"/>
    </location>
</feature>
<feature type="active site" description="Proton acceptor" evidence="1">
    <location>
        <position position="72"/>
    </location>
</feature>
<feature type="site" description="Important for substrate specificity" evidence="1">
    <location>
        <position position="15"/>
    </location>
</feature>
<feature type="site" description="Important for substrate specificity" evidence="1">
    <location>
        <position position="73"/>
    </location>
</feature>
<feature type="site" description="Important for substrate specificity" evidence="1">
    <location>
        <position position="158"/>
    </location>
</feature>
<sequence length="196" mass="21678">MGLELPLVLGTSSVFRREQMERLGIAFQAASPDFDETPMLGESAPQTALRLAEGKARSLTGRFPGALIVGADQVAWCDGRQWGKPMNLANAQKMLMHLSGREIEFYSAVVLLNTVTGRMHRHIDKTVVVMRQLDELHILRYLEREPDAVYCSCAAKSEGLGALLIERIESTDPNALIGLPVFRLVDFLKNEGVDVL</sequence>
<protein>
    <recommendedName>
        <fullName evidence="1">7-methyl-GTP pyrophosphatase</fullName>
        <shortName evidence="1">m(7)GTP pyrophosphatase</shortName>
        <ecNumber evidence="1">3.6.1.-</ecNumber>
    </recommendedName>
</protein>
<reference key="1">
    <citation type="submission" date="2003-03" db="EMBL/GenBank/DDBJ databases">
        <title>The complete genome sequence of Neisseria gonorrhoeae.</title>
        <authorList>
            <person name="Lewis L.A."/>
            <person name="Gillaspy A.F."/>
            <person name="McLaughlin R.E."/>
            <person name="Gipson M."/>
            <person name="Ducey T.F."/>
            <person name="Ownbey T."/>
            <person name="Hartman K."/>
            <person name="Nydick C."/>
            <person name="Carson M.B."/>
            <person name="Vaughn J."/>
            <person name="Thomson C."/>
            <person name="Song L."/>
            <person name="Lin S."/>
            <person name="Yuan X."/>
            <person name="Najar F."/>
            <person name="Zhan M."/>
            <person name="Ren Q."/>
            <person name="Zhu H."/>
            <person name="Qi S."/>
            <person name="Kenton S.M."/>
            <person name="Lai H."/>
            <person name="White J.D."/>
            <person name="Clifton S."/>
            <person name="Roe B.A."/>
            <person name="Dyer D.W."/>
        </authorList>
    </citation>
    <scope>NUCLEOTIDE SEQUENCE [LARGE SCALE GENOMIC DNA]</scope>
    <source>
        <strain>ATCC 700825 / FA 1090</strain>
    </source>
</reference>
<proteinExistence type="inferred from homology"/>